<dbReference type="EMBL" id="CP000943">
    <property type="protein sequence ID" value="ACA18951.1"/>
    <property type="molecule type" value="Genomic_DNA"/>
</dbReference>
<dbReference type="RefSeq" id="WP_012334340.1">
    <property type="nucleotide sequence ID" value="NC_010511.1"/>
</dbReference>
<dbReference type="SMR" id="B0UQW5"/>
<dbReference type="STRING" id="426117.M446_4611"/>
<dbReference type="KEGG" id="met:M446_4611"/>
<dbReference type="eggNOG" id="COG0103">
    <property type="taxonomic scope" value="Bacteria"/>
</dbReference>
<dbReference type="HOGENOM" id="CLU_046483_2_0_5"/>
<dbReference type="GO" id="GO:0022627">
    <property type="term" value="C:cytosolic small ribosomal subunit"/>
    <property type="evidence" value="ECO:0007669"/>
    <property type="project" value="TreeGrafter"/>
</dbReference>
<dbReference type="GO" id="GO:0003723">
    <property type="term" value="F:RNA binding"/>
    <property type="evidence" value="ECO:0007669"/>
    <property type="project" value="TreeGrafter"/>
</dbReference>
<dbReference type="GO" id="GO:0003735">
    <property type="term" value="F:structural constituent of ribosome"/>
    <property type="evidence" value="ECO:0007669"/>
    <property type="project" value="InterPro"/>
</dbReference>
<dbReference type="GO" id="GO:0006412">
    <property type="term" value="P:translation"/>
    <property type="evidence" value="ECO:0007669"/>
    <property type="project" value="UniProtKB-UniRule"/>
</dbReference>
<dbReference type="FunFam" id="3.30.230.10:FF:000001">
    <property type="entry name" value="30S ribosomal protein S9"/>
    <property type="match status" value="1"/>
</dbReference>
<dbReference type="Gene3D" id="3.30.230.10">
    <property type="match status" value="1"/>
</dbReference>
<dbReference type="HAMAP" id="MF_00532_B">
    <property type="entry name" value="Ribosomal_uS9_B"/>
    <property type="match status" value="1"/>
</dbReference>
<dbReference type="InterPro" id="IPR020568">
    <property type="entry name" value="Ribosomal_Su5_D2-typ_SF"/>
</dbReference>
<dbReference type="InterPro" id="IPR000754">
    <property type="entry name" value="Ribosomal_uS9"/>
</dbReference>
<dbReference type="InterPro" id="IPR023035">
    <property type="entry name" value="Ribosomal_uS9_bac/plastid"/>
</dbReference>
<dbReference type="InterPro" id="IPR020574">
    <property type="entry name" value="Ribosomal_uS9_CS"/>
</dbReference>
<dbReference type="InterPro" id="IPR014721">
    <property type="entry name" value="Ribsml_uS5_D2-typ_fold_subgr"/>
</dbReference>
<dbReference type="NCBIfam" id="NF001099">
    <property type="entry name" value="PRK00132.1"/>
    <property type="match status" value="1"/>
</dbReference>
<dbReference type="PANTHER" id="PTHR21569">
    <property type="entry name" value="RIBOSOMAL PROTEIN S9"/>
    <property type="match status" value="1"/>
</dbReference>
<dbReference type="PANTHER" id="PTHR21569:SF1">
    <property type="entry name" value="SMALL RIBOSOMAL SUBUNIT PROTEIN US9M"/>
    <property type="match status" value="1"/>
</dbReference>
<dbReference type="Pfam" id="PF00380">
    <property type="entry name" value="Ribosomal_S9"/>
    <property type="match status" value="1"/>
</dbReference>
<dbReference type="SUPFAM" id="SSF54211">
    <property type="entry name" value="Ribosomal protein S5 domain 2-like"/>
    <property type="match status" value="1"/>
</dbReference>
<dbReference type="PROSITE" id="PS00360">
    <property type="entry name" value="RIBOSOMAL_S9"/>
    <property type="match status" value="1"/>
</dbReference>
<comment type="similarity">
    <text evidence="1">Belongs to the universal ribosomal protein uS9 family.</text>
</comment>
<evidence type="ECO:0000255" key="1">
    <source>
        <dbReference type="HAMAP-Rule" id="MF_00532"/>
    </source>
</evidence>
<evidence type="ECO:0000305" key="2"/>
<organism>
    <name type="scientific">Methylobacterium sp. (strain 4-46)</name>
    <dbReference type="NCBI Taxonomy" id="426117"/>
    <lineage>
        <taxon>Bacteria</taxon>
        <taxon>Pseudomonadati</taxon>
        <taxon>Pseudomonadota</taxon>
        <taxon>Alphaproteobacteria</taxon>
        <taxon>Hyphomicrobiales</taxon>
        <taxon>Methylobacteriaceae</taxon>
        <taxon>Methylobacterium</taxon>
    </lineage>
</organism>
<name>RS9_METS4</name>
<gene>
    <name evidence="1" type="primary">rpsI</name>
    <name type="ordered locus">M446_4611</name>
</gene>
<proteinExistence type="inferred from homology"/>
<keyword id="KW-0687">Ribonucleoprotein</keyword>
<keyword id="KW-0689">Ribosomal protein</keyword>
<feature type="chain" id="PRO_1000128141" description="Small ribosomal subunit protein uS9">
    <location>
        <begin position="1"/>
        <end position="162"/>
    </location>
</feature>
<reference key="1">
    <citation type="submission" date="2008-02" db="EMBL/GenBank/DDBJ databases">
        <title>Complete sequence of chromosome of Methylobacterium sp. 4-46.</title>
        <authorList>
            <consortium name="US DOE Joint Genome Institute"/>
            <person name="Copeland A."/>
            <person name="Lucas S."/>
            <person name="Lapidus A."/>
            <person name="Glavina del Rio T."/>
            <person name="Dalin E."/>
            <person name="Tice H."/>
            <person name="Bruce D."/>
            <person name="Goodwin L."/>
            <person name="Pitluck S."/>
            <person name="Chertkov O."/>
            <person name="Brettin T."/>
            <person name="Detter J.C."/>
            <person name="Han C."/>
            <person name="Kuske C.R."/>
            <person name="Schmutz J."/>
            <person name="Larimer F."/>
            <person name="Land M."/>
            <person name="Hauser L."/>
            <person name="Kyrpides N."/>
            <person name="Ivanova N."/>
            <person name="Marx C.J."/>
            <person name="Richardson P."/>
        </authorList>
    </citation>
    <scope>NUCLEOTIDE SEQUENCE [LARGE SCALE GENOMIC DNA]</scope>
    <source>
        <strain>4-46</strain>
    </source>
</reference>
<protein>
    <recommendedName>
        <fullName evidence="1">Small ribosomal subunit protein uS9</fullName>
    </recommendedName>
    <alternativeName>
        <fullName evidence="2">30S ribosomal protein S9</fullName>
    </alternativeName>
</protein>
<accession>B0UQW5</accession>
<sequence length="162" mass="17886">MATLQSLADLGQANKAALGTAENEAPVHVQKLDAHGRAYATGKRKDAVARVWIKPGSGVITVNDRPVETYFARPVLRMILQQPLQVANRADQYDIVVTVTGGGLSGQAGAVRHGLAKALTHYEPELRSPLKREGFLTRDPRVVERKKYGRKKARRSFQFSKR</sequence>